<reference key="1">
    <citation type="journal article" date="2002" name="Mol. Microbiol.">
        <title>Genome sequence of Streptococcus agalactiae, a pathogen causing invasive neonatal disease.</title>
        <authorList>
            <person name="Glaser P."/>
            <person name="Rusniok C."/>
            <person name="Buchrieser C."/>
            <person name="Chevalier F."/>
            <person name="Frangeul L."/>
            <person name="Msadek T."/>
            <person name="Zouine M."/>
            <person name="Couve E."/>
            <person name="Lalioui L."/>
            <person name="Poyart C."/>
            <person name="Trieu-Cuot P."/>
            <person name="Kunst F."/>
        </authorList>
    </citation>
    <scope>NUCLEOTIDE SEQUENCE [LARGE SCALE GENOMIC DNA]</scope>
    <source>
        <strain>NEM316</strain>
    </source>
</reference>
<dbReference type="EMBL" id="AL766843">
    <property type="protein sequence ID" value="CAD45717.1"/>
    <property type="molecule type" value="Genomic_DNA"/>
</dbReference>
<dbReference type="RefSeq" id="WP_000245501.1">
    <property type="nucleotide sequence ID" value="NC_004368.1"/>
</dbReference>
<dbReference type="SMR" id="Q8E7S7"/>
<dbReference type="GeneID" id="66885032"/>
<dbReference type="KEGG" id="san:rpsH"/>
<dbReference type="eggNOG" id="COG0096">
    <property type="taxonomic scope" value="Bacteria"/>
</dbReference>
<dbReference type="HOGENOM" id="CLU_098428_0_2_9"/>
<dbReference type="Proteomes" id="UP000000823">
    <property type="component" value="Chromosome"/>
</dbReference>
<dbReference type="GO" id="GO:1990904">
    <property type="term" value="C:ribonucleoprotein complex"/>
    <property type="evidence" value="ECO:0007669"/>
    <property type="project" value="UniProtKB-KW"/>
</dbReference>
<dbReference type="GO" id="GO:0005840">
    <property type="term" value="C:ribosome"/>
    <property type="evidence" value="ECO:0007669"/>
    <property type="project" value="UniProtKB-KW"/>
</dbReference>
<dbReference type="GO" id="GO:0019843">
    <property type="term" value="F:rRNA binding"/>
    <property type="evidence" value="ECO:0007669"/>
    <property type="project" value="UniProtKB-UniRule"/>
</dbReference>
<dbReference type="GO" id="GO:0003735">
    <property type="term" value="F:structural constituent of ribosome"/>
    <property type="evidence" value="ECO:0007669"/>
    <property type="project" value="InterPro"/>
</dbReference>
<dbReference type="GO" id="GO:0006412">
    <property type="term" value="P:translation"/>
    <property type="evidence" value="ECO:0007669"/>
    <property type="project" value="UniProtKB-UniRule"/>
</dbReference>
<dbReference type="FunFam" id="3.30.1370.30:FF:000002">
    <property type="entry name" value="30S ribosomal protein S8"/>
    <property type="match status" value="1"/>
</dbReference>
<dbReference type="FunFam" id="3.30.1490.10:FF:000001">
    <property type="entry name" value="30S ribosomal protein S8"/>
    <property type="match status" value="1"/>
</dbReference>
<dbReference type="Gene3D" id="3.30.1370.30">
    <property type="match status" value="1"/>
</dbReference>
<dbReference type="Gene3D" id="3.30.1490.10">
    <property type="match status" value="1"/>
</dbReference>
<dbReference type="HAMAP" id="MF_01302_B">
    <property type="entry name" value="Ribosomal_uS8_B"/>
    <property type="match status" value="1"/>
</dbReference>
<dbReference type="InterPro" id="IPR000630">
    <property type="entry name" value="Ribosomal_uS8"/>
</dbReference>
<dbReference type="InterPro" id="IPR047863">
    <property type="entry name" value="Ribosomal_uS8_CS"/>
</dbReference>
<dbReference type="InterPro" id="IPR035987">
    <property type="entry name" value="Ribosomal_uS8_sf"/>
</dbReference>
<dbReference type="NCBIfam" id="NF001109">
    <property type="entry name" value="PRK00136.1"/>
    <property type="match status" value="1"/>
</dbReference>
<dbReference type="PANTHER" id="PTHR11758">
    <property type="entry name" value="40S RIBOSOMAL PROTEIN S15A"/>
    <property type="match status" value="1"/>
</dbReference>
<dbReference type="Pfam" id="PF00410">
    <property type="entry name" value="Ribosomal_S8"/>
    <property type="match status" value="1"/>
</dbReference>
<dbReference type="SUPFAM" id="SSF56047">
    <property type="entry name" value="Ribosomal protein S8"/>
    <property type="match status" value="1"/>
</dbReference>
<dbReference type="PROSITE" id="PS00053">
    <property type="entry name" value="RIBOSOMAL_S8"/>
    <property type="match status" value="1"/>
</dbReference>
<keyword id="KW-0687">Ribonucleoprotein</keyword>
<keyword id="KW-0689">Ribosomal protein</keyword>
<keyword id="KW-0694">RNA-binding</keyword>
<keyword id="KW-0699">rRNA-binding</keyword>
<comment type="function">
    <text evidence="1">One of the primary rRNA binding proteins, it binds directly to 16S rRNA central domain where it helps coordinate assembly of the platform of the 30S subunit.</text>
</comment>
<comment type="subunit">
    <text evidence="1">Part of the 30S ribosomal subunit. Contacts proteins S5 and S12.</text>
</comment>
<comment type="similarity">
    <text evidence="1">Belongs to the universal ribosomal protein uS8 family.</text>
</comment>
<proteinExistence type="inferred from homology"/>
<protein>
    <recommendedName>
        <fullName evidence="1">Small ribosomal subunit protein uS8</fullName>
    </recommendedName>
    <alternativeName>
        <fullName evidence="2">30S ribosomal protein S8</fullName>
    </alternativeName>
</protein>
<sequence length="132" mass="14785">MVMTDPIADFLTRIRNANQAKHEVLEVPASNIKKGIADILKREGFVKNVEVIEDDKQGIIRVFLKYGQNGERVITNLKRISKPGLRVYTKHEDMPKVLNGLGIAIVSTSEGLLTDKEARQKNVGGEVLAYIW</sequence>
<feature type="chain" id="PRO_0000126491" description="Small ribosomal subunit protein uS8">
    <location>
        <begin position="1"/>
        <end position="132"/>
    </location>
</feature>
<name>RS8_STRA3</name>
<evidence type="ECO:0000255" key="1">
    <source>
        <dbReference type="HAMAP-Rule" id="MF_01302"/>
    </source>
</evidence>
<evidence type="ECO:0000305" key="2"/>
<gene>
    <name evidence="1" type="primary">rpsH</name>
    <name type="ordered locus">gbs0072</name>
</gene>
<accession>Q8E7S7</accession>
<organism>
    <name type="scientific">Streptococcus agalactiae serotype III (strain NEM316)</name>
    <dbReference type="NCBI Taxonomy" id="211110"/>
    <lineage>
        <taxon>Bacteria</taxon>
        <taxon>Bacillati</taxon>
        <taxon>Bacillota</taxon>
        <taxon>Bacilli</taxon>
        <taxon>Lactobacillales</taxon>
        <taxon>Streptococcaceae</taxon>
        <taxon>Streptococcus</taxon>
    </lineage>
</organism>